<protein>
    <recommendedName>
        <fullName evidence="1">Small ribosomal subunit protein uS19</fullName>
    </recommendedName>
    <alternativeName>
        <fullName evidence="3">30S ribosomal protein S19</fullName>
    </alternativeName>
</protein>
<comment type="function">
    <text evidence="1">Protein S19 forms a complex with S13 that binds strongly to the 16S ribosomal RNA.</text>
</comment>
<comment type="similarity">
    <text evidence="1">Belongs to the universal ribosomal protein uS19 family.</text>
</comment>
<comment type="sequence caution" evidence="3">
    <conflict type="erroneous initiation">
        <sequence resource="EMBL-CDS" id="ABX07549"/>
    </conflict>
</comment>
<feature type="chain" id="PRO_0000354292" description="Small ribosomal subunit protein uS19">
    <location>
        <begin position="1"/>
        <end position="95"/>
    </location>
</feature>
<feature type="region of interest" description="Disordered" evidence="2">
    <location>
        <begin position="76"/>
        <end position="95"/>
    </location>
</feature>
<feature type="compositionally biased region" description="Basic residues" evidence="2">
    <location>
        <begin position="80"/>
        <end position="95"/>
    </location>
</feature>
<evidence type="ECO:0000255" key="1">
    <source>
        <dbReference type="HAMAP-Rule" id="MF_00531"/>
    </source>
</evidence>
<evidence type="ECO:0000256" key="2">
    <source>
        <dbReference type="SAM" id="MobiDB-lite"/>
    </source>
</evidence>
<evidence type="ECO:0000305" key="3"/>
<dbReference type="EMBL" id="CP000875">
    <property type="protein sequence ID" value="ABX07549.1"/>
    <property type="status" value="ALT_INIT"/>
    <property type="molecule type" value="Genomic_DNA"/>
</dbReference>
<dbReference type="SMR" id="A9B416"/>
<dbReference type="FunCoup" id="A9B416">
    <property type="interactions" value="469"/>
</dbReference>
<dbReference type="STRING" id="316274.Haur_4919"/>
<dbReference type="KEGG" id="hau:Haur_4919"/>
<dbReference type="eggNOG" id="COG0185">
    <property type="taxonomic scope" value="Bacteria"/>
</dbReference>
<dbReference type="HOGENOM" id="CLU_144911_0_1_0"/>
<dbReference type="InParanoid" id="A9B416"/>
<dbReference type="Proteomes" id="UP000000787">
    <property type="component" value="Chromosome"/>
</dbReference>
<dbReference type="GO" id="GO:0005737">
    <property type="term" value="C:cytoplasm"/>
    <property type="evidence" value="ECO:0007669"/>
    <property type="project" value="UniProtKB-ARBA"/>
</dbReference>
<dbReference type="GO" id="GO:0015935">
    <property type="term" value="C:small ribosomal subunit"/>
    <property type="evidence" value="ECO:0007669"/>
    <property type="project" value="InterPro"/>
</dbReference>
<dbReference type="GO" id="GO:0019843">
    <property type="term" value="F:rRNA binding"/>
    <property type="evidence" value="ECO:0007669"/>
    <property type="project" value="UniProtKB-UniRule"/>
</dbReference>
<dbReference type="GO" id="GO:0003735">
    <property type="term" value="F:structural constituent of ribosome"/>
    <property type="evidence" value="ECO:0007669"/>
    <property type="project" value="InterPro"/>
</dbReference>
<dbReference type="GO" id="GO:0000028">
    <property type="term" value="P:ribosomal small subunit assembly"/>
    <property type="evidence" value="ECO:0007669"/>
    <property type="project" value="TreeGrafter"/>
</dbReference>
<dbReference type="GO" id="GO:0006412">
    <property type="term" value="P:translation"/>
    <property type="evidence" value="ECO:0007669"/>
    <property type="project" value="UniProtKB-UniRule"/>
</dbReference>
<dbReference type="FunFam" id="3.30.860.10:FF:000001">
    <property type="entry name" value="30S ribosomal protein S19"/>
    <property type="match status" value="1"/>
</dbReference>
<dbReference type="Gene3D" id="3.30.860.10">
    <property type="entry name" value="30s Ribosomal Protein S19, Chain A"/>
    <property type="match status" value="1"/>
</dbReference>
<dbReference type="HAMAP" id="MF_00531">
    <property type="entry name" value="Ribosomal_uS19"/>
    <property type="match status" value="1"/>
</dbReference>
<dbReference type="InterPro" id="IPR002222">
    <property type="entry name" value="Ribosomal_uS19"/>
</dbReference>
<dbReference type="InterPro" id="IPR005732">
    <property type="entry name" value="Ribosomal_uS19_bac-type"/>
</dbReference>
<dbReference type="InterPro" id="IPR020934">
    <property type="entry name" value="Ribosomal_uS19_CS"/>
</dbReference>
<dbReference type="InterPro" id="IPR023575">
    <property type="entry name" value="Ribosomal_uS19_SF"/>
</dbReference>
<dbReference type="NCBIfam" id="TIGR01050">
    <property type="entry name" value="rpsS_bact"/>
    <property type="match status" value="1"/>
</dbReference>
<dbReference type="PANTHER" id="PTHR11880">
    <property type="entry name" value="RIBOSOMAL PROTEIN S19P FAMILY MEMBER"/>
    <property type="match status" value="1"/>
</dbReference>
<dbReference type="PANTHER" id="PTHR11880:SF8">
    <property type="entry name" value="SMALL RIBOSOMAL SUBUNIT PROTEIN US19M"/>
    <property type="match status" value="1"/>
</dbReference>
<dbReference type="Pfam" id="PF00203">
    <property type="entry name" value="Ribosomal_S19"/>
    <property type="match status" value="1"/>
</dbReference>
<dbReference type="PIRSF" id="PIRSF002144">
    <property type="entry name" value="Ribosomal_S19"/>
    <property type="match status" value="1"/>
</dbReference>
<dbReference type="PRINTS" id="PR00975">
    <property type="entry name" value="RIBOSOMALS19"/>
</dbReference>
<dbReference type="SUPFAM" id="SSF54570">
    <property type="entry name" value="Ribosomal protein S19"/>
    <property type="match status" value="1"/>
</dbReference>
<dbReference type="PROSITE" id="PS00323">
    <property type="entry name" value="RIBOSOMAL_S19"/>
    <property type="match status" value="1"/>
</dbReference>
<gene>
    <name evidence="1" type="primary">rpsS</name>
    <name type="ordered locus">Haur_4919</name>
</gene>
<keyword id="KW-0687">Ribonucleoprotein</keyword>
<keyword id="KW-0689">Ribosomal protein</keyword>
<keyword id="KW-0694">RNA-binding</keyword>
<keyword id="KW-0699">rRNA-binding</keyword>
<proteinExistence type="inferred from homology"/>
<sequence length="95" mass="10826">MSRSTKKGPFVDVRLLSRVETMNRGNEKRPLKTWSRDSTIFPQMVGHTIAVHDGRRHVPVYITENMVGHKLGEFAPTRTFRGHGGKKADKRGKLK</sequence>
<accession>A9B416</accession>
<reference key="1">
    <citation type="journal article" date="2011" name="Stand. Genomic Sci.">
        <title>Complete genome sequence of the filamentous gliding predatory bacterium Herpetosiphon aurantiacus type strain (114-95(T)).</title>
        <authorList>
            <person name="Kiss H."/>
            <person name="Nett M."/>
            <person name="Domin N."/>
            <person name="Martin K."/>
            <person name="Maresca J.A."/>
            <person name="Copeland A."/>
            <person name="Lapidus A."/>
            <person name="Lucas S."/>
            <person name="Berry K.W."/>
            <person name="Glavina Del Rio T."/>
            <person name="Dalin E."/>
            <person name="Tice H."/>
            <person name="Pitluck S."/>
            <person name="Richardson P."/>
            <person name="Bruce D."/>
            <person name="Goodwin L."/>
            <person name="Han C."/>
            <person name="Detter J.C."/>
            <person name="Schmutz J."/>
            <person name="Brettin T."/>
            <person name="Land M."/>
            <person name="Hauser L."/>
            <person name="Kyrpides N.C."/>
            <person name="Ivanova N."/>
            <person name="Goeker M."/>
            <person name="Woyke T."/>
            <person name="Klenk H.P."/>
            <person name="Bryant D.A."/>
        </authorList>
    </citation>
    <scope>NUCLEOTIDE SEQUENCE [LARGE SCALE GENOMIC DNA]</scope>
    <source>
        <strain>ATCC 23779 / DSM 785 / 114-95</strain>
    </source>
</reference>
<name>RS19_HERA2</name>
<organism>
    <name type="scientific">Herpetosiphon aurantiacus (strain ATCC 23779 / DSM 785 / 114-95)</name>
    <dbReference type="NCBI Taxonomy" id="316274"/>
    <lineage>
        <taxon>Bacteria</taxon>
        <taxon>Bacillati</taxon>
        <taxon>Chloroflexota</taxon>
        <taxon>Chloroflexia</taxon>
        <taxon>Herpetosiphonales</taxon>
        <taxon>Herpetosiphonaceae</taxon>
        <taxon>Herpetosiphon</taxon>
    </lineage>
</organism>